<keyword id="KW-0966">Cell projection</keyword>
<keyword id="KW-0963">Cytoplasm</keyword>
<keyword id="KW-0206">Cytoskeleton</keyword>
<keyword id="KW-1185">Reference proteome</keyword>
<evidence type="ECO:0000256" key="1">
    <source>
        <dbReference type="SAM" id="MobiDB-lite"/>
    </source>
</evidence>
<evidence type="ECO:0000269" key="2">
    <source>
    </source>
</evidence>
<evidence type="ECO:0000269" key="3">
    <source>
    </source>
</evidence>
<evidence type="ECO:0000305" key="4"/>
<feature type="chain" id="PRO_0000440044" description="Uncharacterized protein C11orf97 homolog">
    <location>
        <begin position="1"/>
        <end position="121"/>
    </location>
</feature>
<feature type="region of interest" description="Disordered" evidence="1">
    <location>
        <begin position="1"/>
        <end position="41"/>
    </location>
</feature>
<feature type="region of interest" description="Disordered" evidence="1">
    <location>
        <begin position="94"/>
        <end position="121"/>
    </location>
</feature>
<feature type="compositionally biased region" description="Polar residues" evidence="1">
    <location>
        <begin position="98"/>
        <end position="108"/>
    </location>
</feature>
<sequence>MRRQEALAGTASEAGREGEQPRPAGLGCRTRAEPGGPQESRQQWKTFLYCEPHKRIKEVLEEELSIKRDECHVKSPPTVALDGIWSIRRNLPVGGTISGQQSRNSSLPQAKYYSRHGGLRR</sequence>
<comment type="subcellular location">
    <subcellularLocation>
        <location evidence="2 3">Cytoplasm</location>
        <location evidence="2 3">Cytoskeleton</location>
        <location evidence="2 3">Cilium basal body</location>
    </subcellularLocation>
</comment>
<comment type="tissue specificity">
    <text evidence="2 3">Predominantly expressed in tissues containing motile cilia (PubMed:27914912, PubMed:28666954). Also expressed in non-motile ciliated adult olfactory bulbs (PubMed:28666954).</text>
</comment>
<comment type="developmental stage">
    <text evidence="2 3">Expressed in the developing fetal lung epithelium, embryonic ventral node and developing brain (at protein level) (PubMed:27914912, PubMed:28666954).</text>
</comment>
<comment type="induction">
    <text evidence="2 3">Expression is activated by FOXJ1 and NOTO.</text>
</comment>
<comment type="disruption phenotype">
    <text evidence="3">Mice exhibited no impaired function of motile cilia or non-motile cilia.</text>
</comment>
<reference key="1">
    <citation type="journal article" date="2005" name="Science">
        <title>The transcriptional landscape of the mammalian genome.</title>
        <authorList>
            <person name="Carninci P."/>
            <person name="Kasukawa T."/>
            <person name="Katayama S."/>
            <person name="Gough J."/>
            <person name="Frith M.C."/>
            <person name="Maeda N."/>
            <person name="Oyama R."/>
            <person name="Ravasi T."/>
            <person name="Lenhard B."/>
            <person name="Wells C."/>
            <person name="Kodzius R."/>
            <person name="Shimokawa K."/>
            <person name="Bajic V.B."/>
            <person name="Brenner S.E."/>
            <person name="Batalov S."/>
            <person name="Forrest A.R."/>
            <person name="Zavolan M."/>
            <person name="Davis M.J."/>
            <person name="Wilming L.G."/>
            <person name="Aidinis V."/>
            <person name="Allen J.E."/>
            <person name="Ambesi-Impiombato A."/>
            <person name="Apweiler R."/>
            <person name="Aturaliya R.N."/>
            <person name="Bailey T.L."/>
            <person name="Bansal M."/>
            <person name="Baxter L."/>
            <person name="Beisel K.W."/>
            <person name="Bersano T."/>
            <person name="Bono H."/>
            <person name="Chalk A.M."/>
            <person name="Chiu K.P."/>
            <person name="Choudhary V."/>
            <person name="Christoffels A."/>
            <person name="Clutterbuck D.R."/>
            <person name="Crowe M.L."/>
            <person name="Dalla E."/>
            <person name="Dalrymple B.P."/>
            <person name="de Bono B."/>
            <person name="Della Gatta G."/>
            <person name="di Bernardo D."/>
            <person name="Down T."/>
            <person name="Engstrom P."/>
            <person name="Fagiolini M."/>
            <person name="Faulkner G."/>
            <person name="Fletcher C.F."/>
            <person name="Fukushima T."/>
            <person name="Furuno M."/>
            <person name="Futaki S."/>
            <person name="Gariboldi M."/>
            <person name="Georgii-Hemming P."/>
            <person name="Gingeras T.R."/>
            <person name="Gojobori T."/>
            <person name="Green R.E."/>
            <person name="Gustincich S."/>
            <person name="Harbers M."/>
            <person name="Hayashi Y."/>
            <person name="Hensch T.K."/>
            <person name="Hirokawa N."/>
            <person name="Hill D."/>
            <person name="Huminiecki L."/>
            <person name="Iacono M."/>
            <person name="Ikeo K."/>
            <person name="Iwama A."/>
            <person name="Ishikawa T."/>
            <person name="Jakt M."/>
            <person name="Kanapin A."/>
            <person name="Katoh M."/>
            <person name="Kawasawa Y."/>
            <person name="Kelso J."/>
            <person name="Kitamura H."/>
            <person name="Kitano H."/>
            <person name="Kollias G."/>
            <person name="Krishnan S.P."/>
            <person name="Kruger A."/>
            <person name="Kummerfeld S.K."/>
            <person name="Kurochkin I.V."/>
            <person name="Lareau L.F."/>
            <person name="Lazarevic D."/>
            <person name="Lipovich L."/>
            <person name="Liu J."/>
            <person name="Liuni S."/>
            <person name="McWilliam S."/>
            <person name="Madan Babu M."/>
            <person name="Madera M."/>
            <person name="Marchionni L."/>
            <person name="Matsuda H."/>
            <person name="Matsuzawa S."/>
            <person name="Miki H."/>
            <person name="Mignone F."/>
            <person name="Miyake S."/>
            <person name="Morris K."/>
            <person name="Mottagui-Tabar S."/>
            <person name="Mulder N."/>
            <person name="Nakano N."/>
            <person name="Nakauchi H."/>
            <person name="Ng P."/>
            <person name="Nilsson R."/>
            <person name="Nishiguchi S."/>
            <person name="Nishikawa S."/>
            <person name="Nori F."/>
            <person name="Ohara O."/>
            <person name="Okazaki Y."/>
            <person name="Orlando V."/>
            <person name="Pang K.C."/>
            <person name="Pavan W.J."/>
            <person name="Pavesi G."/>
            <person name="Pesole G."/>
            <person name="Petrovsky N."/>
            <person name="Piazza S."/>
            <person name="Reed J."/>
            <person name="Reid J.F."/>
            <person name="Ring B.Z."/>
            <person name="Ringwald M."/>
            <person name="Rost B."/>
            <person name="Ruan Y."/>
            <person name="Salzberg S.L."/>
            <person name="Sandelin A."/>
            <person name="Schneider C."/>
            <person name="Schoenbach C."/>
            <person name="Sekiguchi K."/>
            <person name="Semple C.A."/>
            <person name="Seno S."/>
            <person name="Sessa L."/>
            <person name="Sheng Y."/>
            <person name="Shibata Y."/>
            <person name="Shimada H."/>
            <person name="Shimada K."/>
            <person name="Silva D."/>
            <person name="Sinclair B."/>
            <person name="Sperling S."/>
            <person name="Stupka E."/>
            <person name="Sugiura K."/>
            <person name="Sultana R."/>
            <person name="Takenaka Y."/>
            <person name="Taki K."/>
            <person name="Tammoja K."/>
            <person name="Tan S.L."/>
            <person name="Tang S."/>
            <person name="Taylor M.S."/>
            <person name="Tegner J."/>
            <person name="Teichmann S.A."/>
            <person name="Ueda H.R."/>
            <person name="van Nimwegen E."/>
            <person name="Verardo R."/>
            <person name="Wei C.L."/>
            <person name="Yagi K."/>
            <person name="Yamanishi H."/>
            <person name="Zabarovsky E."/>
            <person name="Zhu S."/>
            <person name="Zimmer A."/>
            <person name="Hide W."/>
            <person name="Bult C."/>
            <person name="Grimmond S.M."/>
            <person name="Teasdale R.D."/>
            <person name="Liu E.T."/>
            <person name="Brusic V."/>
            <person name="Quackenbush J."/>
            <person name="Wahlestedt C."/>
            <person name="Mattick J.S."/>
            <person name="Hume D.A."/>
            <person name="Kai C."/>
            <person name="Sasaki D."/>
            <person name="Tomaru Y."/>
            <person name="Fukuda S."/>
            <person name="Kanamori-Katayama M."/>
            <person name="Suzuki M."/>
            <person name="Aoki J."/>
            <person name="Arakawa T."/>
            <person name="Iida J."/>
            <person name="Imamura K."/>
            <person name="Itoh M."/>
            <person name="Kato T."/>
            <person name="Kawaji H."/>
            <person name="Kawagashira N."/>
            <person name="Kawashima T."/>
            <person name="Kojima M."/>
            <person name="Kondo S."/>
            <person name="Konno H."/>
            <person name="Nakano K."/>
            <person name="Ninomiya N."/>
            <person name="Nishio T."/>
            <person name="Okada M."/>
            <person name="Plessy C."/>
            <person name="Shibata K."/>
            <person name="Shiraki T."/>
            <person name="Suzuki S."/>
            <person name="Tagami M."/>
            <person name="Waki K."/>
            <person name="Watahiki A."/>
            <person name="Okamura-Oho Y."/>
            <person name="Suzuki H."/>
            <person name="Kawai J."/>
            <person name="Hayashizaki Y."/>
        </authorList>
    </citation>
    <scope>NUCLEOTIDE SEQUENCE [LARGE SCALE MRNA]</scope>
</reference>
<reference key="2">
    <citation type="journal article" date="2009" name="PLoS Biol.">
        <title>Lineage-specific biology revealed by a finished genome assembly of the mouse.</title>
        <authorList>
            <person name="Church D.M."/>
            <person name="Goodstadt L."/>
            <person name="Hillier L.W."/>
            <person name="Zody M.C."/>
            <person name="Goldstein S."/>
            <person name="She X."/>
            <person name="Bult C.J."/>
            <person name="Agarwala R."/>
            <person name="Cherry J.L."/>
            <person name="DiCuccio M."/>
            <person name="Hlavina W."/>
            <person name="Kapustin Y."/>
            <person name="Meric P."/>
            <person name="Maglott D."/>
            <person name="Birtle Z."/>
            <person name="Marques A.C."/>
            <person name="Graves T."/>
            <person name="Zhou S."/>
            <person name="Teague B."/>
            <person name="Potamousis K."/>
            <person name="Churas C."/>
            <person name="Place M."/>
            <person name="Herschleb J."/>
            <person name="Runnheim R."/>
            <person name="Forrest D."/>
            <person name="Amos-Landgraf J."/>
            <person name="Schwartz D.C."/>
            <person name="Cheng Z."/>
            <person name="Lindblad-Toh K."/>
            <person name="Eichler E.E."/>
            <person name="Ponting C.P."/>
        </authorList>
    </citation>
    <scope>NUCLEOTIDE SEQUENCE [LARGE SCALE GENOMIC DNA]</scope>
    <source>
        <strain>C57BL/6J</strain>
    </source>
</reference>
<reference key="3">
    <citation type="submission" date="2005-07" db="EMBL/GenBank/DDBJ databases">
        <authorList>
            <person name="Mural R.J."/>
            <person name="Adams M.D."/>
            <person name="Myers E.W."/>
            <person name="Smith H.O."/>
            <person name="Venter J.C."/>
        </authorList>
    </citation>
    <scope>NUCLEOTIDE SEQUENCE [LARGE SCALE GENOMIC DNA]</scope>
</reference>
<reference key="4">
    <citation type="journal article" date="2004" name="Genome Res.">
        <title>The status, quality, and expansion of the NIH full-length cDNA project: the Mammalian Gene Collection (MGC).</title>
        <authorList>
            <consortium name="The MGC Project Team"/>
        </authorList>
    </citation>
    <scope>NUCLEOTIDE SEQUENCE [LARGE SCALE MRNA]</scope>
</reference>
<reference key="5">
    <citation type="journal article" date="2017" name="Dev. Biol.">
        <title>Identification of FOXJ1 effectors during ciliogenesis in the foetal respiratory epithelium and embryonic left-right organiser of the mouse.</title>
        <authorList>
            <person name="Stauber M."/>
            <person name="Weidemann M."/>
            <person name="Dittrich-Breiholz O."/>
            <person name="Lobschat K."/>
            <person name="Alten L."/>
            <person name="Mai M."/>
            <person name="Beckers A."/>
            <person name="Kracht M."/>
            <person name="Gossler A."/>
        </authorList>
    </citation>
    <scope>SUBCELLULAR LOCATION</scope>
    <scope>TISSUE SPECIFICITY</scope>
    <scope>DEVELOPMENTAL STAGE</scope>
    <scope>INDUCTION</scope>
</reference>
<reference key="6">
    <citation type="journal article" date="2017" name="Dev. Biol.">
        <title>1700012B09Rik, a FOXJ1 effector gene active in ciliated tissues of the mouse but not essential for motile ciliogenesis.</title>
        <authorList>
            <person name="Stauber M."/>
            <person name="Boldt K."/>
            <person name="Wrede C."/>
            <person name="Weidemann M."/>
            <person name="Kellner M."/>
            <person name="Schuster-Gossler K."/>
            <person name="Kuehnel M.P."/>
            <person name="Hegermann J."/>
            <person name="Ueffing M."/>
            <person name="Gossler A."/>
        </authorList>
    </citation>
    <scope>SUBCELLULAR LOCATION</scope>
    <scope>TISSUE SPECIFICITY</scope>
    <scope>DISRUPTION PHENOTYPE</scope>
    <scope>DEVELOPMENTAL STAGE</scope>
    <scope>INDUCTION</scope>
</reference>
<proteinExistence type="evidence at protein level"/>
<name>CK097_MOUSE</name>
<accession>Q9DAE7</accession>
<protein>
    <recommendedName>
        <fullName evidence="4">Uncharacterized protein C11orf97 homolog</fullName>
    </recommendedName>
</protein>
<organism>
    <name type="scientific">Mus musculus</name>
    <name type="common">Mouse</name>
    <dbReference type="NCBI Taxonomy" id="10090"/>
    <lineage>
        <taxon>Eukaryota</taxon>
        <taxon>Metazoa</taxon>
        <taxon>Chordata</taxon>
        <taxon>Craniata</taxon>
        <taxon>Vertebrata</taxon>
        <taxon>Euteleostomi</taxon>
        <taxon>Mammalia</taxon>
        <taxon>Eutheria</taxon>
        <taxon>Euarchontoglires</taxon>
        <taxon>Glires</taxon>
        <taxon>Rodentia</taxon>
        <taxon>Myomorpha</taxon>
        <taxon>Muroidea</taxon>
        <taxon>Muridae</taxon>
        <taxon>Murinae</taxon>
        <taxon>Mus</taxon>
        <taxon>Mus</taxon>
    </lineage>
</organism>
<dbReference type="EMBL" id="AK005890">
    <property type="protein sequence ID" value="BAB24304.1"/>
    <property type="molecule type" value="mRNA"/>
</dbReference>
<dbReference type="EMBL" id="CT030247">
    <property type="status" value="NOT_ANNOTATED_CDS"/>
    <property type="molecule type" value="Genomic_DNA"/>
</dbReference>
<dbReference type="EMBL" id="CH466522">
    <property type="protein sequence ID" value="EDL25002.1"/>
    <property type="molecule type" value="Genomic_DNA"/>
</dbReference>
<dbReference type="EMBL" id="CH466522">
    <property type="protein sequence ID" value="EDL25003.1"/>
    <property type="molecule type" value="Genomic_DNA"/>
</dbReference>
<dbReference type="EMBL" id="BC092535">
    <property type="protein sequence ID" value="AAH92535.1"/>
    <property type="molecule type" value="mRNA"/>
</dbReference>
<dbReference type="CCDS" id="CCDS40536.1"/>
<dbReference type="RefSeq" id="NP_083582.2">
    <property type="nucleotide sequence ID" value="NM_029306.3"/>
</dbReference>
<dbReference type="FunCoup" id="Q9DAE7">
    <property type="interactions" value="13"/>
</dbReference>
<dbReference type="STRING" id="10090.ENSMUSP00000049826"/>
<dbReference type="PaxDb" id="10090-ENSMUSP00000049826"/>
<dbReference type="DNASU" id="69325"/>
<dbReference type="Ensembl" id="ENSMUST00000060330.5">
    <property type="protein sequence ID" value="ENSMUSP00000049826.4"/>
    <property type="gene ID" value="ENSMUSG00000031927.10"/>
</dbReference>
<dbReference type="Ensembl" id="ENSMUST00000188350.7">
    <property type="protein sequence ID" value="ENSMUSP00000139796.2"/>
    <property type="gene ID" value="ENSMUSG00000031927.10"/>
</dbReference>
<dbReference type="GeneID" id="69325"/>
<dbReference type="KEGG" id="mmu:69325"/>
<dbReference type="UCSC" id="uc009oey.2">
    <property type="organism name" value="mouse"/>
</dbReference>
<dbReference type="AGR" id="MGI:1916575"/>
<dbReference type="MGI" id="MGI:1916575">
    <property type="gene designation" value="1700012B09Rik"/>
</dbReference>
<dbReference type="VEuPathDB" id="HostDB:ENSMUSG00000031927"/>
<dbReference type="eggNOG" id="ENOG502SAWP">
    <property type="taxonomic scope" value="Eukaryota"/>
</dbReference>
<dbReference type="GeneTree" id="ENSGT00520000058823"/>
<dbReference type="HOGENOM" id="CLU_2009274_0_0_1"/>
<dbReference type="InParanoid" id="Q9DAE7"/>
<dbReference type="OMA" id="HIKRDEC"/>
<dbReference type="OrthoDB" id="6154260at2759"/>
<dbReference type="BioGRID-ORCS" id="69325">
    <property type="hits" value="2 hits in 77 CRISPR screens"/>
</dbReference>
<dbReference type="PRO" id="PR:Q9DAE7"/>
<dbReference type="Proteomes" id="UP000000589">
    <property type="component" value="Chromosome 9"/>
</dbReference>
<dbReference type="RNAct" id="Q9DAE7">
    <property type="molecule type" value="protein"/>
</dbReference>
<dbReference type="Bgee" id="ENSMUSG00000031927">
    <property type="expression patterns" value="Expressed in olfactory epithelium and 56 other cell types or tissues"/>
</dbReference>
<dbReference type="ExpressionAtlas" id="Q9DAE7">
    <property type="expression patterns" value="baseline and differential"/>
</dbReference>
<dbReference type="GO" id="GO:0036064">
    <property type="term" value="C:ciliary basal body"/>
    <property type="evidence" value="ECO:0000314"/>
    <property type="project" value="UniProtKB"/>
</dbReference>
<dbReference type="GO" id="GO:0097546">
    <property type="term" value="C:ciliary base"/>
    <property type="evidence" value="ECO:0000314"/>
    <property type="project" value="MGI"/>
</dbReference>
<dbReference type="GO" id="GO:0005737">
    <property type="term" value="C:cytoplasm"/>
    <property type="evidence" value="ECO:0007669"/>
    <property type="project" value="UniProtKB-KW"/>
</dbReference>
<dbReference type="InterPro" id="IPR040429">
    <property type="entry name" value="C11orf97-like"/>
</dbReference>
<dbReference type="PANTHER" id="PTHR38326">
    <property type="entry name" value="CHROMOSOME 11 OPEN READING FRAME 97"/>
    <property type="match status" value="1"/>
</dbReference>
<dbReference type="PANTHER" id="PTHR38326:SF1">
    <property type="entry name" value="CHROMOSOME 11 OPEN READING FRAME 97"/>
    <property type="match status" value="1"/>
</dbReference>